<organism>
    <name type="scientific">Sulfurisphaera tokodaii (strain DSM 16993 / JCM 10545 / NBRC 100140 / 7)</name>
    <name type="common">Sulfolobus tokodaii</name>
    <dbReference type="NCBI Taxonomy" id="273063"/>
    <lineage>
        <taxon>Archaea</taxon>
        <taxon>Thermoproteota</taxon>
        <taxon>Thermoprotei</taxon>
        <taxon>Sulfolobales</taxon>
        <taxon>Sulfolobaceae</taxon>
        <taxon>Sulfurisphaera</taxon>
    </lineage>
</organism>
<feature type="chain" id="PRO_0000149703" description="Large ribosomal subunit protein eL21">
    <location>
        <begin position="1"/>
        <end position="103"/>
    </location>
</feature>
<comment type="similarity">
    <text evidence="1">Belongs to the eukaryotic ribosomal protein eL21 family.</text>
</comment>
<sequence length="103" mass="11815">MVKHSKGYRTRTRKLLTKNVRERGAVPRLSLLMEEFKEGDYVVIKINPSVHKGMPHRRYHGKVGVIQGKRGKAYIVRVTLGDKEKVIIVRPEHLAKFNGIKNG</sequence>
<dbReference type="EMBL" id="BA000023">
    <property type="protein sequence ID" value="BAB65449.1"/>
    <property type="molecule type" value="Genomic_DNA"/>
</dbReference>
<dbReference type="RefSeq" id="WP_010978432.1">
    <property type="nucleotide sequence ID" value="NC_003106.2"/>
</dbReference>
<dbReference type="SMR" id="Q975F2"/>
<dbReference type="STRING" id="273063.STK_04590"/>
<dbReference type="GeneID" id="1458396"/>
<dbReference type="KEGG" id="sto:STK_04590"/>
<dbReference type="PATRIC" id="fig|273063.9.peg.531"/>
<dbReference type="eggNOG" id="arCOG04129">
    <property type="taxonomic scope" value="Archaea"/>
</dbReference>
<dbReference type="OrthoDB" id="6295at2157"/>
<dbReference type="Proteomes" id="UP000001015">
    <property type="component" value="Chromosome"/>
</dbReference>
<dbReference type="GO" id="GO:1990904">
    <property type="term" value="C:ribonucleoprotein complex"/>
    <property type="evidence" value="ECO:0007669"/>
    <property type="project" value="UniProtKB-KW"/>
</dbReference>
<dbReference type="GO" id="GO:0005840">
    <property type="term" value="C:ribosome"/>
    <property type="evidence" value="ECO:0007669"/>
    <property type="project" value="UniProtKB-KW"/>
</dbReference>
<dbReference type="GO" id="GO:0003735">
    <property type="term" value="F:structural constituent of ribosome"/>
    <property type="evidence" value="ECO:0007669"/>
    <property type="project" value="InterPro"/>
</dbReference>
<dbReference type="GO" id="GO:0006412">
    <property type="term" value="P:translation"/>
    <property type="evidence" value="ECO:0007669"/>
    <property type="project" value="UniProtKB-UniRule"/>
</dbReference>
<dbReference type="FunFam" id="2.30.30.70:FF:000001">
    <property type="entry name" value="60S ribosomal protein L21"/>
    <property type="match status" value="1"/>
</dbReference>
<dbReference type="Gene3D" id="2.30.30.70">
    <property type="entry name" value="Ribosomal protein L21"/>
    <property type="match status" value="1"/>
</dbReference>
<dbReference type="HAMAP" id="MF_00369">
    <property type="entry name" value="Ribosomal_eL21"/>
    <property type="match status" value="1"/>
</dbReference>
<dbReference type="InterPro" id="IPR001147">
    <property type="entry name" value="Ribosomal_eL21"/>
</dbReference>
<dbReference type="InterPro" id="IPR022856">
    <property type="entry name" value="Ribosomal_eL21_arc"/>
</dbReference>
<dbReference type="InterPro" id="IPR018259">
    <property type="entry name" value="Ribosomal_eL21_CS"/>
</dbReference>
<dbReference type="InterPro" id="IPR036948">
    <property type="entry name" value="Ribosomal_eL21_sf"/>
</dbReference>
<dbReference type="InterPro" id="IPR008991">
    <property type="entry name" value="Translation_prot_SH3-like_sf"/>
</dbReference>
<dbReference type="NCBIfam" id="NF003303">
    <property type="entry name" value="PRK04306.1"/>
    <property type="match status" value="1"/>
</dbReference>
<dbReference type="PANTHER" id="PTHR20981">
    <property type="entry name" value="60S RIBOSOMAL PROTEIN L21"/>
    <property type="match status" value="1"/>
</dbReference>
<dbReference type="Pfam" id="PF01157">
    <property type="entry name" value="Ribosomal_L21e"/>
    <property type="match status" value="1"/>
</dbReference>
<dbReference type="SUPFAM" id="SSF50104">
    <property type="entry name" value="Translation proteins SH3-like domain"/>
    <property type="match status" value="1"/>
</dbReference>
<dbReference type="PROSITE" id="PS01171">
    <property type="entry name" value="RIBOSOMAL_L21E"/>
    <property type="match status" value="1"/>
</dbReference>
<gene>
    <name evidence="1" type="primary">rpl21e</name>
    <name type="ordered locus">STK_04590</name>
</gene>
<keyword id="KW-1185">Reference proteome</keyword>
<keyword id="KW-0687">Ribonucleoprotein</keyword>
<keyword id="KW-0689">Ribosomal protein</keyword>
<protein>
    <recommendedName>
        <fullName evidence="1">Large ribosomal subunit protein eL21</fullName>
    </recommendedName>
    <alternativeName>
        <fullName evidence="2">50S ribosomal protein L21e</fullName>
    </alternativeName>
</protein>
<name>RL21_SULTO</name>
<evidence type="ECO:0000255" key="1">
    <source>
        <dbReference type="HAMAP-Rule" id="MF_00369"/>
    </source>
</evidence>
<evidence type="ECO:0000305" key="2"/>
<reference key="1">
    <citation type="journal article" date="2001" name="DNA Res.">
        <title>Complete genome sequence of an aerobic thermoacidophilic Crenarchaeon, Sulfolobus tokodaii strain7.</title>
        <authorList>
            <person name="Kawarabayasi Y."/>
            <person name="Hino Y."/>
            <person name="Horikawa H."/>
            <person name="Jin-no K."/>
            <person name="Takahashi M."/>
            <person name="Sekine M."/>
            <person name="Baba S."/>
            <person name="Ankai A."/>
            <person name="Kosugi H."/>
            <person name="Hosoyama A."/>
            <person name="Fukui S."/>
            <person name="Nagai Y."/>
            <person name="Nishijima K."/>
            <person name="Otsuka R."/>
            <person name="Nakazawa H."/>
            <person name="Takamiya M."/>
            <person name="Kato Y."/>
            <person name="Yoshizawa T."/>
            <person name="Tanaka T."/>
            <person name="Kudoh Y."/>
            <person name="Yamazaki J."/>
            <person name="Kushida N."/>
            <person name="Oguchi A."/>
            <person name="Aoki K."/>
            <person name="Masuda S."/>
            <person name="Yanagii M."/>
            <person name="Nishimura M."/>
            <person name="Yamagishi A."/>
            <person name="Oshima T."/>
            <person name="Kikuchi H."/>
        </authorList>
    </citation>
    <scope>NUCLEOTIDE SEQUENCE [LARGE SCALE GENOMIC DNA]</scope>
    <source>
        <strain>DSM 16993 / JCM 10545 / NBRC 100140 / 7</strain>
    </source>
</reference>
<proteinExistence type="inferred from homology"/>
<accession>Q975F2</accession>